<reference key="1">
    <citation type="journal article" date="1990" name="Gene">
        <title>Cloning and expression of two genes encoding highly homologous hemolysins from a Kanagawa phenomenon-positive Vibrio parahaemolyticus T4750 strain.</title>
        <authorList>
            <person name="Iida T."/>
            <person name="Yamamoto K."/>
        </authorList>
    </citation>
    <scope>NUCLEOTIDE SEQUENCE [GENOMIC DNA]</scope>
    <source>
        <strain>T4750</strain>
    </source>
</reference>
<reference key="2">
    <citation type="journal article" date="1990" name="Mol. Microbiol.">
        <title>Duplication and variation of the thermostable direct haemolysin (tdh) gene in Vibrio parahaemolyticus.</title>
        <authorList>
            <person name="Nishibuchi M."/>
            <person name="Kaper J.B."/>
        </authorList>
    </citation>
    <scope>NUCLEOTIDE SEQUENCE [GENOMIC DNA]</scope>
    <source>
        <strain>WP1</strain>
    </source>
</reference>
<reference key="3">
    <citation type="journal article" date="2003" name="Lancet">
        <title>Genome sequence of Vibrio parahaemolyticus: a pathogenic mechanism distinct from that of V. cholerae.</title>
        <authorList>
            <person name="Makino K."/>
            <person name="Oshima K."/>
            <person name="Kurokawa K."/>
            <person name="Yokoyama K."/>
            <person name="Uda T."/>
            <person name="Tagomori K."/>
            <person name="Iijima Y."/>
            <person name="Najima M."/>
            <person name="Nakano M."/>
            <person name="Yamashita A."/>
            <person name="Kubota Y."/>
            <person name="Kimura S."/>
            <person name="Yasunaga T."/>
            <person name="Honda T."/>
            <person name="Shinagawa H."/>
            <person name="Hattori M."/>
            <person name="Iida T."/>
        </authorList>
    </citation>
    <scope>NUCLEOTIDE SEQUENCE [LARGE SCALE GENOMIC DNA]</scope>
    <source>
        <strain>RIMD 2210633</strain>
    </source>
</reference>
<reference key="4">
    <citation type="journal article" date="1987" name="J. Biochem.">
        <title>Amino acid sequence of thermostable direct hemolysin produced by Vibrio parahaemolyticus.</title>
        <authorList>
            <person name="Tsunasawa S."/>
            <person name="Sugihara A."/>
            <person name="Masaki T."/>
            <person name="Sakiyama F."/>
            <person name="Takeda Y."/>
            <person name="Miwatani T."/>
            <person name="Narita K."/>
        </authorList>
    </citation>
    <scope>PROTEIN SEQUENCE OF 25-189</scope>
</reference>
<comment type="function">
    <text>Bacterial hemolysins are exotoxins that attack blood cell membranes and cause cell rupture by mechanisms not clearly defined.</text>
</comment>
<comment type="subunit">
    <text>Homodimer.</text>
</comment>
<comment type="similarity">
    <text evidence="2">Belongs to the TDH hemolysin family.</text>
</comment>
<feature type="signal peptide" evidence="1">
    <location>
        <begin position="1"/>
        <end position="24"/>
    </location>
</feature>
<feature type="chain" id="PRO_0000013362" description="Thermostable direct hemolysin 2">
    <location>
        <begin position="25"/>
        <end position="189"/>
    </location>
</feature>
<feature type="disulfide bond">
    <location>
        <begin position="175"/>
        <end position="185"/>
    </location>
</feature>
<feature type="sequence conflict" description="In Ref. 1; BAA14131 and 4; AA sequence." evidence="2" ref="1 4">
    <original>N</original>
    <variation>S</variation>
    <location>
        <position position="136"/>
    </location>
</feature>
<feature type="sequence conflict" description="In Ref. 4; AA sequence." evidence="2" ref="4">
    <original>E</original>
    <variation>Q</variation>
    <location>
        <position position="142"/>
    </location>
</feature>
<feature type="strand" evidence="3">
    <location>
        <begin position="37"/>
        <end position="46"/>
    </location>
</feature>
<feature type="helix" evidence="3">
    <location>
        <begin position="47"/>
        <end position="50"/>
    </location>
</feature>
<feature type="strand" evidence="3">
    <location>
        <begin position="51"/>
        <end position="53"/>
    </location>
</feature>
<feature type="strand" evidence="3">
    <location>
        <begin position="57"/>
        <end position="70"/>
    </location>
</feature>
<feature type="strand" evidence="3">
    <location>
        <begin position="77"/>
        <end position="98"/>
    </location>
</feature>
<feature type="strand" evidence="3">
    <location>
        <begin position="101"/>
        <end position="112"/>
    </location>
</feature>
<feature type="strand" evidence="3">
    <location>
        <begin position="115"/>
        <end position="124"/>
    </location>
</feature>
<feature type="helix" evidence="3">
    <location>
        <begin position="131"/>
        <end position="138"/>
    </location>
</feature>
<feature type="helix" evidence="3">
    <location>
        <begin position="142"/>
        <end position="144"/>
    </location>
</feature>
<feature type="strand" evidence="3">
    <location>
        <begin position="145"/>
        <end position="153"/>
    </location>
</feature>
<feature type="strand" evidence="3">
    <location>
        <begin position="158"/>
        <end position="166"/>
    </location>
</feature>
<feature type="strand" evidence="3">
    <location>
        <begin position="169"/>
        <end position="177"/>
    </location>
</feature>
<feature type="turn" evidence="3">
    <location>
        <begin position="179"/>
        <end position="181"/>
    </location>
</feature>
<feature type="helix" evidence="3">
    <location>
        <begin position="182"/>
        <end position="185"/>
    </location>
</feature>
<dbReference type="EMBL" id="D90100">
    <property type="protein sequence ID" value="BAA14131.1"/>
    <property type="molecule type" value="Genomic_DNA"/>
</dbReference>
<dbReference type="EMBL" id="X54341">
    <property type="protein sequence ID" value="CAA38229.2"/>
    <property type="molecule type" value="Genomic_DNA"/>
</dbReference>
<dbReference type="EMBL" id="BA000032">
    <property type="protein sequence ID" value="BAC62657.1"/>
    <property type="molecule type" value="Genomic_DNA"/>
</dbReference>
<dbReference type="PIR" id="JW0035">
    <property type="entry name" value="JW0035"/>
</dbReference>
<dbReference type="RefSeq" id="NP_800824.1">
    <property type="nucleotide sequence ID" value="NC_004605.1"/>
</dbReference>
<dbReference type="RefSeq" id="WP_005463268.1">
    <property type="nucleotide sequence ID" value="NC_004605.1"/>
</dbReference>
<dbReference type="PDB" id="3A57">
    <property type="method" value="X-ray"/>
    <property type="resolution" value="1.50 A"/>
    <property type="chains" value="A=25-189"/>
</dbReference>
<dbReference type="PDBsum" id="3A57"/>
<dbReference type="SMR" id="P19250"/>
<dbReference type="GeneID" id="1192010"/>
<dbReference type="KEGG" id="vpa:VPA1314"/>
<dbReference type="PATRIC" id="fig|223926.6.peg.4238"/>
<dbReference type="HOGENOM" id="CLU_1495597_0_0_6"/>
<dbReference type="EvolutionaryTrace" id="P19250"/>
<dbReference type="Proteomes" id="UP000002493">
    <property type="component" value="Chromosome 2"/>
</dbReference>
<dbReference type="GO" id="GO:0005576">
    <property type="term" value="C:extracellular region"/>
    <property type="evidence" value="ECO:0007669"/>
    <property type="project" value="InterPro"/>
</dbReference>
<dbReference type="GO" id="GO:0090729">
    <property type="term" value="F:toxin activity"/>
    <property type="evidence" value="ECO:0007669"/>
    <property type="project" value="UniProtKB-KW"/>
</dbReference>
<dbReference type="GO" id="GO:0019836">
    <property type="term" value="P:symbiont-mediated hemolysis of host erythrocyte"/>
    <property type="evidence" value="ECO:0007669"/>
    <property type="project" value="InterPro"/>
</dbReference>
<dbReference type="DisProt" id="DP00668"/>
<dbReference type="Gene3D" id="2.60.270.30">
    <property type="entry name" value="Vibrio parahaemolyticus thermostable direct hemolysin"/>
    <property type="match status" value="1"/>
</dbReference>
<dbReference type="InterPro" id="IPR038689">
    <property type="entry name" value="TDH_sf"/>
</dbReference>
<dbReference type="InterPro" id="IPR005015">
    <property type="entry name" value="Thermostable_hemolysn_vibrio"/>
</dbReference>
<dbReference type="Pfam" id="PF03347">
    <property type="entry name" value="TDH"/>
    <property type="match status" value="1"/>
</dbReference>
<protein>
    <recommendedName>
        <fullName>Thermostable direct hemolysin 2</fullName>
    </recommendedName>
    <alternativeName>
        <fullName>Kanagawa phenomenon-associated hemolysin</fullName>
    </alternativeName>
</protein>
<gene>
    <name type="primary">tdh2</name>
    <name type="synonym">tdh</name>
    <name type="synonym">trh</name>
    <name type="ordered locus">VPA1314</name>
</gene>
<proteinExistence type="evidence at protein level"/>
<sequence length="189" mass="21562">MKYRYFAKKSFLFISMLAAFKTFAFELPSVPFPAPGSDEILFVVRDTTFNTNAPVNVEVSDFWTNRNVKRKPYKDVYGQSVFTTSGTKWLTSYMTVNINDKDYTMAAVSGYKHGHSAVFVKSDQVQLQHSYDSVANFVGEDEDSIPSKMYLDETPEYFVNVEAYESGSGNILVMCISNKESFFECKHQQ</sequence>
<organism>
    <name type="scientific">Vibrio parahaemolyticus serotype O3:K6 (strain RIMD 2210633)</name>
    <dbReference type="NCBI Taxonomy" id="223926"/>
    <lineage>
        <taxon>Bacteria</taxon>
        <taxon>Pseudomonadati</taxon>
        <taxon>Pseudomonadota</taxon>
        <taxon>Gammaproteobacteria</taxon>
        <taxon>Vibrionales</taxon>
        <taxon>Vibrionaceae</taxon>
        <taxon>Vibrio</taxon>
    </lineage>
</organism>
<keyword id="KW-0002">3D-structure</keyword>
<keyword id="KW-0204">Cytolysis</keyword>
<keyword id="KW-0903">Direct protein sequencing</keyword>
<keyword id="KW-1015">Disulfide bond</keyword>
<keyword id="KW-0354">Hemolysis</keyword>
<keyword id="KW-0732">Signal</keyword>
<keyword id="KW-0800">Toxin</keyword>
<keyword id="KW-0843">Virulence</keyword>
<accession>P19250</accession>
<accession>P07624</accession>
<accession>Q9RIH5</accession>
<evidence type="ECO:0000269" key="1">
    <source>
    </source>
</evidence>
<evidence type="ECO:0000305" key="2"/>
<evidence type="ECO:0007829" key="3">
    <source>
        <dbReference type="PDB" id="3A57"/>
    </source>
</evidence>
<name>HLY2_VIBPA</name>